<feature type="initiator methionine" description="Removed" evidence="3 5">
    <location>
        <position position="1"/>
    </location>
</feature>
<feature type="chain" id="PRO_0000158068" description="Macrophage migration inhibitory factor">
    <location>
        <begin position="2"/>
        <end position="115"/>
    </location>
</feature>
<feature type="active site" description="Proton acceptor; via imino nitrogen" evidence="2">
    <location>
        <position position="2"/>
    </location>
</feature>
<feature type="binding site" evidence="1">
    <location>
        <position position="33"/>
    </location>
    <ligand>
        <name>substrate</name>
    </ligand>
</feature>
<feature type="binding site" evidence="1">
    <location>
        <position position="65"/>
    </location>
    <ligand>
        <name>substrate</name>
    </ligand>
</feature>
<feature type="binding site" evidence="1">
    <location>
        <position position="98"/>
    </location>
    <ligand>
        <name>substrate</name>
    </ligand>
</feature>
<feature type="modified residue" description="N6-acetyllysine; alternate" evidence="1">
    <location>
        <position position="78"/>
    </location>
</feature>
<feature type="modified residue" description="N6-succinyllysine; alternate" evidence="2">
    <location>
        <position position="78"/>
    </location>
</feature>
<feature type="sequence conflict" description="In Ref. 2; AAA62644." evidence="6" ref="2">
    <original>S</original>
    <variation>R</variation>
    <location>
        <position position="51"/>
    </location>
</feature>
<feature type="strand" evidence="7">
    <location>
        <begin position="3"/>
        <end position="8"/>
    </location>
</feature>
<feature type="helix" evidence="7">
    <location>
        <begin position="12"/>
        <end position="14"/>
    </location>
</feature>
<feature type="helix" evidence="7">
    <location>
        <begin position="19"/>
        <end position="31"/>
    </location>
</feature>
<feature type="helix" evidence="7">
    <location>
        <begin position="35"/>
        <end position="37"/>
    </location>
</feature>
<feature type="strand" evidence="7">
    <location>
        <begin position="39"/>
        <end position="43"/>
    </location>
</feature>
<feature type="strand" evidence="7">
    <location>
        <begin position="58"/>
        <end position="66"/>
    </location>
</feature>
<feature type="helix" evidence="7">
    <location>
        <begin position="70"/>
        <end position="88"/>
    </location>
</feature>
<feature type="helix" evidence="7">
    <location>
        <begin position="92"/>
        <end position="94"/>
    </location>
</feature>
<feature type="strand" evidence="7">
    <location>
        <begin position="95"/>
        <end position="102"/>
    </location>
</feature>
<name>MIF_RAT</name>
<keyword id="KW-0002">3D-structure</keyword>
<keyword id="KW-0007">Acetylation</keyword>
<keyword id="KW-0202">Cytokine</keyword>
<keyword id="KW-0963">Cytoplasm</keyword>
<keyword id="KW-0903">Direct protein sequencing</keyword>
<keyword id="KW-0391">Immunity</keyword>
<keyword id="KW-0395">Inflammatory response</keyword>
<keyword id="KW-0399">Innate immunity</keyword>
<keyword id="KW-0413">Isomerase</keyword>
<keyword id="KW-1185">Reference proteome</keyword>
<keyword id="KW-0964">Secreted</keyword>
<accession>P30904</accession>
<protein>
    <recommendedName>
        <fullName>Macrophage migration inhibitory factor</fullName>
        <shortName>MIF</shortName>
        <ecNumber evidence="1">5.3.2.1</ecNumber>
    </recommendedName>
    <alternativeName>
        <fullName>Glutathione-binding 13 kDa protein</fullName>
    </alternativeName>
    <alternativeName>
        <fullName>L-dopachrome isomerase</fullName>
    </alternativeName>
    <alternativeName>
        <fullName>L-dopachrome tautomerase</fullName>
        <ecNumber evidence="1">5.3.3.12</ecNumber>
    </alternativeName>
    <alternativeName>
        <fullName>Phenylpyruvate tautomerase</fullName>
    </alternativeName>
</protein>
<sequence>MPMFIVNTNVPRASVPEGFLSELTQQLAQATGKPAQYIAVHVVPDQLMTFSGTSDPCALCSLHSIGKIGGAQNRNYSKLLCGLLSDRLHISPDRVYINYYDMNAANVGWNGSTFA</sequence>
<reference key="1">
    <citation type="journal article" date="1994" name="Biochem. Mol. Biol. Int.">
        <title>Glutathione binding rat liver 13k protein is the homologue of the macrophage migration inhibitory factor.</title>
        <authorList>
            <person name="Sakai M."/>
            <person name="Nishihira J."/>
            <person name="Hibiya Y."/>
            <person name="Koyama Y."/>
            <person name="Nishi S."/>
        </authorList>
    </citation>
    <scope>NUCLEOTIDE SEQUENCE [MRNA]</scope>
    <scope>TISSUE SPECIFICITY</scope>
    <source>
        <tissue>Liver</tissue>
    </source>
</reference>
<reference key="2">
    <citation type="submission" date="1995-03" db="EMBL/GenBank/DDBJ databases">
        <authorList>
            <person name="Wen Y."/>
            <person name="Li G."/>
            <person name="Bekhor I."/>
        </authorList>
    </citation>
    <scope>NUCLEOTIDE SEQUENCE [MRNA]</scope>
    <source>
        <tissue>Lens</tissue>
    </source>
</reference>
<reference key="3">
    <citation type="submission" date="1996-07" db="EMBL/GenBank/DDBJ databases">
        <authorList>
            <person name="Sleeman M.A."/>
            <person name="Huckle J.W."/>
            <person name="Robinson M."/>
            <person name="Jahoda C.A.B."/>
            <person name="Reynolds A.J."/>
            <person name="Whitehouse C.J."/>
        </authorList>
    </citation>
    <scope>NUCLEOTIDE SEQUENCE [MRNA]</scope>
    <source>
        <strain>PVG/C</strain>
    </source>
</reference>
<reference key="4">
    <citation type="journal article" date="2004" name="Genome Res.">
        <title>The status, quality, and expansion of the NIH full-length cDNA project: the Mammalian Gene Collection (MGC).</title>
        <authorList>
            <consortium name="The MGC Project Team"/>
        </authorList>
    </citation>
    <scope>NUCLEOTIDE SEQUENCE [LARGE SCALE MRNA]</scope>
    <source>
        <tissue>Pituitary</tissue>
    </source>
</reference>
<reference key="5">
    <citation type="journal article" date="1992" name="Nature">
        <title>Rat liver protein linking chemical and immunological detoxification systems.</title>
        <authorList>
            <person name="Blocki F.A."/>
            <person name="Schlievert P.M."/>
            <person name="Wackett L.P."/>
        </authorList>
    </citation>
    <scope>PROTEIN SEQUENCE OF 2-26</scope>
</reference>
<reference key="6">
    <citation type="submission" date="2007-07" db="UniProtKB">
        <authorList>
            <person name="Lubec G."/>
            <person name="Diao W."/>
            <person name="Kang S.U."/>
        </authorList>
    </citation>
    <scope>PROTEIN SEQUENCE OF 2-12 AND 79-87</scope>
    <scope>IDENTIFICATION BY MASS SPECTROMETRY</scope>
    <source>
        <strain>Sprague-Dawley</strain>
        <tissue>Brain</tissue>
        <tissue>Hippocampus</tissue>
    </source>
</reference>
<reference key="7">
    <citation type="journal article" date="1996" name="Nat. Struct. Biol.">
        <title>Crystal structure of the macrophage migration inhibitory factor from rat liver.</title>
        <authorList>
            <person name="Suzuki M."/>
            <person name="Sugimoto H."/>
            <person name="Nakagawa A."/>
            <person name="Tanaka I."/>
            <person name="Nishihira J."/>
            <person name="Sakai M."/>
        </authorList>
    </citation>
    <scope>X-RAY CRYSTALLOGRAPHY (2.2 ANGSTROMS)</scope>
    <source>
        <tissue>Liver</tissue>
    </source>
</reference>
<proteinExistence type="evidence at protein level"/>
<dbReference type="EC" id="5.3.2.1" evidence="1"/>
<dbReference type="EC" id="5.3.3.12" evidence="1"/>
<dbReference type="EMBL" id="S73424">
    <property type="protein sequence ID" value="AAB32392.1"/>
    <property type="molecule type" value="mRNA"/>
</dbReference>
<dbReference type="EMBL" id="U20999">
    <property type="protein sequence ID" value="AAA62644.1"/>
    <property type="molecule type" value="mRNA"/>
</dbReference>
<dbReference type="EMBL" id="U62326">
    <property type="protein sequence ID" value="AAB04024.1"/>
    <property type="molecule type" value="mRNA"/>
</dbReference>
<dbReference type="EMBL" id="BC061545">
    <property type="protein sequence ID" value="AAH61545.1"/>
    <property type="molecule type" value="mRNA"/>
</dbReference>
<dbReference type="PIR" id="S27117">
    <property type="entry name" value="S27117"/>
</dbReference>
<dbReference type="RefSeq" id="NP_112313.1">
    <property type="nucleotide sequence ID" value="NM_031051.2"/>
</dbReference>
<dbReference type="RefSeq" id="XP_008772068.1">
    <property type="nucleotide sequence ID" value="XM_008773846.2"/>
</dbReference>
<dbReference type="RefSeq" id="XP_017457271.1">
    <property type="nucleotide sequence ID" value="XM_017601782.1"/>
</dbReference>
<dbReference type="RefSeq" id="XP_063135635.1">
    <property type="nucleotide sequence ID" value="XM_063279565.1"/>
</dbReference>
<dbReference type="RefSeq" id="XP_063135636.1">
    <property type="nucleotide sequence ID" value="XM_063279566.1"/>
</dbReference>
<dbReference type="RefSeq" id="XP_063135637.1">
    <property type="nucleotide sequence ID" value="XM_063279567.1"/>
</dbReference>
<dbReference type="RefSeq" id="XP_063135638.1">
    <property type="nucleotide sequence ID" value="XM_063279568.1"/>
</dbReference>
<dbReference type="RefSeq" id="XP_063135639.1">
    <property type="nucleotide sequence ID" value="XM_063279569.1"/>
</dbReference>
<dbReference type="RefSeq" id="XP_063135640.1">
    <property type="nucleotide sequence ID" value="XM_063279570.1"/>
</dbReference>
<dbReference type="RefSeq" id="XP_063135641.1">
    <property type="nucleotide sequence ID" value="XM_063279571.1"/>
</dbReference>
<dbReference type="RefSeq" id="XP_063135642.1">
    <property type="nucleotide sequence ID" value="XM_063279572.1"/>
</dbReference>
<dbReference type="RefSeq" id="XP_063135643.1">
    <property type="nucleotide sequence ID" value="XM_063279573.1"/>
</dbReference>
<dbReference type="RefSeq" id="XP_063135644.1">
    <property type="nucleotide sequence ID" value="XM_063279574.1"/>
</dbReference>
<dbReference type="PDB" id="1FIM">
    <property type="method" value="X-ray"/>
    <property type="resolution" value="2.20 A"/>
    <property type="chains" value="A=2-115"/>
</dbReference>
<dbReference type="PDBsum" id="1FIM"/>
<dbReference type="SMR" id="P30904"/>
<dbReference type="BioGRID" id="249580">
    <property type="interactions" value="3"/>
</dbReference>
<dbReference type="FunCoup" id="P30904">
    <property type="interactions" value="834"/>
</dbReference>
<dbReference type="IntAct" id="P30904">
    <property type="interactions" value="4"/>
</dbReference>
<dbReference type="MINT" id="P30904"/>
<dbReference type="STRING" id="10116.ENSRNOP00000008608"/>
<dbReference type="ChEMBL" id="CHEMBL4524037"/>
<dbReference type="iPTMnet" id="P30904"/>
<dbReference type="PhosphoSitePlus" id="P30904"/>
<dbReference type="SwissPalm" id="P30904"/>
<dbReference type="jPOST" id="P30904"/>
<dbReference type="PaxDb" id="10116-ENSRNOP00000008608"/>
<dbReference type="Ensembl" id="ENSRNOT00000008608.5">
    <property type="protein sequence ID" value="ENSRNOP00000008608.3"/>
    <property type="gene ID" value="ENSRNOG00000006589.5"/>
</dbReference>
<dbReference type="GeneID" id="81683"/>
<dbReference type="KEGG" id="rno:81683"/>
<dbReference type="UCSC" id="RGD:621163">
    <property type="organism name" value="rat"/>
</dbReference>
<dbReference type="AGR" id="RGD:621163"/>
<dbReference type="CTD" id="4282"/>
<dbReference type="RGD" id="621163">
    <property type="gene designation" value="Mif"/>
</dbReference>
<dbReference type="eggNOG" id="KOG1759">
    <property type="taxonomic scope" value="Eukaryota"/>
</dbReference>
<dbReference type="GeneTree" id="ENSGT00940000155608"/>
<dbReference type="HOGENOM" id="CLU_129906_1_1_1"/>
<dbReference type="InParanoid" id="P30904"/>
<dbReference type="OMA" id="YINFFDM"/>
<dbReference type="OrthoDB" id="255819at2759"/>
<dbReference type="PhylomeDB" id="P30904"/>
<dbReference type="TreeFam" id="TF313853"/>
<dbReference type="Reactome" id="R-RNO-202733">
    <property type="pathway name" value="Cell surface interactions at the vascular wall"/>
</dbReference>
<dbReference type="Reactome" id="R-RNO-6798695">
    <property type="pathway name" value="Neutrophil degranulation"/>
</dbReference>
<dbReference type="EvolutionaryTrace" id="P30904"/>
<dbReference type="PRO" id="PR:P30904"/>
<dbReference type="Proteomes" id="UP000002494">
    <property type="component" value="Chromosome 20"/>
</dbReference>
<dbReference type="Bgee" id="ENSRNOG00000006589">
    <property type="expression patterns" value="Expressed in ovary and 19 other cell types or tissues"/>
</dbReference>
<dbReference type="ExpressionAtlas" id="P30904">
    <property type="expression patterns" value="baseline and differential"/>
</dbReference>
<dbReference type="GO" id="GO:0009986">
    <property type="term" value="C:cell surface"/>
    <property type="evidence" value="ECO:0000266"/>
    <property type="project" value="RGD"/>
</dbReference>
<dbReference type="GO" id="GO:0005737">
    <property type="term" value="C:cytoplasm"/>
    <property type="evidence" value="ECO:0000266"/>
    <property type="project" value="RGD"/>
</dbReference>
<dbReference type="GO" id="GO:0005576">
    <property type="term" value="C:extracellular region"/>
    <property type="evidence" value="ECO:0000266"/>
    <property type="project" value="RGD"/>
</dbReference>
<dbReference type="GO" id="GO:0005615">
    <property type="term" value="C:extracellular space"/>
    <property type="evidence" value="ECO:0000314"/>
    <property type="project" value="RGD"/>
</dbReference>
<dbReference type="GO" id="GO:0005886">
    <property type="term" value="C:plasma membrane"/>
    <property type="evidence" value="ECO:0000266"/>
    <property type="project" value="RGD"/>
</dbReference>
<dbReference type="GO" id="GO:0042056">
    <property type="term" value="F:chemoattractant activity"/>
    <property type="evidence" value="ECO:0000266"/>
    <property type="project" value="RGD"/>
</dbReference>
<dbReference type="GO" id="GO:0005125">
    <property type="term" value="F:cytokine activity"/>
    <property type="evidence" value="ECO:0000266"/>
    <property type="project" value="RGD"/>
</dbReference>
<dbReference type="GO" id="GO:0005126">
    <property type="term" value="F:cytokine receptor binding"/>
    <property type="evidence" value="ECO:0000266"/>
    <property type="project" value="RGD"/>
</dbReference>
<dbReference type="GO" id="GO:0004167">
    <property type="term" value="F:dopachrome isomerase activity"/>
    <property type="evidence" value="ECO:0000250"/>
    <property type="project" value="UniProtKB"/>
</dbReference>
<dbReference type="GO" id="GO:0042802">
    <property type="term" value="F:identical protein binding"/>
    <property type="evidence" value="ECO:0000266"/>
    <property type="project" value="RGD"/>
</dbReference>
<dbReference type="GO" id="GO:0050178">
    <property type="term" value="F:phenylpyruvate tautomerase activity"/>
    <property type="evidence" value="ECO:0000266"/>
    <property type="project" value="RGD"/>
</dbReference>
<dbReference type="GO" id="GO:0002020">
    <property type="term" value="F:protease binding"/>
    <property type="evidence" value="ECO:0000266"/>
    <property type="project" value="RGD"/>
</dbReference>
<dbReference type="GO" id="GO:0044877">
    <property type="term" value="F:protein-containing complex binding"/>
    <property type="evidence" value="ECO:0000314"/>
    <property type="project" value="RGD"/>
</dbReference>
<dbReference type="GO" id="GO:0002035">
    <property type="term" value="P:brain renin-angiotensin system"/>
    <property type="evidence" value="ECO:0000315"/>
    <property type="project" value="RGD"/>
</dbReference>
<dbReference type="GO" id="GO:0019752">
    <property type="term" value="P:carboxylic acid metabolic process"/>
    <property type="evidence" value="ECO:0000266"/>
    <property type="project" value="RGD"/>
</dbReference>
<dbReference type="GO" id="GO:0007166">
    <property type="term" value="P:cell surface receptor signaling pathway"/>
    <property type="evidence" value="ECO:0000266"/>
    <property type="project" value="RGD"/>
</dbReference>
<dbReference type="GO" id="GO:0070301">
    <property type="term" value="P:cellular response to hydrogen peroxide"/>
    <property type="evidence" value="ECO:0000270"/>
    <property type="project" value="RGD"/>
</dbReference>
<dbReference type="GO" id="GO:0071456">
    <property type="term" value="P:cellular response to hypoxia"/>
    <property type="evidence" value="ECO:0000270"/>
    <property type="project" value="RGD"/>
</dbReference>
<dbReference type="GO" id="GO:0090398">
    <property type="term" value="P:cellular senescence"/>
    <property type="evidence" value="ECO:0000266"/>
    <property type="project" value="RGD"/>
</dbReference>
<dbReference type="GO" id="GO:0030330">
    <property type="term" value="P:DNA damage response, signal transduction by p53 class mediator"/>
    <property type="evidence" value="ECO:0000266"/>
    <property type="project" value="RGD"/>
</dbReference>
<dbReference type="GO" id="GO:0042756">
    <property type="term" value="P:drinking behavior"/>
    <property type="evidence" value="ECO:0000315"/>
    <property type="project" value="RGD"/>
</dbReference>
<dbReference type="GO" id="GO:0001942">
    <property type="term" value="P:hair follicle development"/>
    <property type="evidence" value="ECO:0000270"/>
    <property type="project" value="RGD"/>
</dbReference>
<dbReference type="GO" id="GO:0006954">
    <property type="term" value="P:inflammatory response"/>
    <property type="evidence" value="ECO:0007669"/>
    <property type="project" value="UniProtKB-KW"/>
</dbReference>
<dbReference type="GO" id="GO:0045087">
    <property type="term" value="P:innate immune response"/>
    <property type="evidence" value="ECO:0007669"/>
    <property type="project" value="UniProtKB-KW"/>
</dbReference>
<dbReference type="GO" id="GO:0043066">
    <property type="term" value="P:negative regulation of apoptotic process"/>
    <property type="evidence" value="ECO:0000266"/>
    <property type="project" value="RGD"/>
</dbReference>
<dbReference type="GO" id="GO:0030336">
    <property type="term" value="P:negative regulation of cell migration"/>
    <property type="evidence" value="ECO:0000266"/>
    <property type="project" value="RGD"/>
</dbReference>
<dbReference type="GO" id="GO:2000773">
    <property type="term" value="P:negative regulation of cellular senescence"/>
    <property type="evidence" value="ECO:0000266"/>
    <property type="project" value="RGD"/>
</dbReference>
<dbReference type="GO" id="GO:0043518">
    <property type="term" value="P:negative regulation of DNA damage response, signal transduction by p53 class mediator"/>
    <property type="evidence" value="ECO:0000266"/>
    <property type="project" value="RGD"/>
</dbReference>
<dbReference type="GO" id="GO:0010629">
    <property type="term" value="P:negative regulation of gene expression"/>
    <property type="evidence" value="ECO:0000266"/>
    <property type="project" value="RGD"/>
</dbReference>
<dbReference type="GO" id="GO:1902166">
    <property type="term" value="P:negative regulation of intrinsic apoptotic signaling pathway in response to DNA damage by p53 class mediator"/>
    <property type="evidence" value="ECO:0000266"/>
    <property type="project" value="RGD"/>
</dbReference>
<dbReference type="GO" id="GO:0010760">
    <property type="term" value="P:negative regulation of macrophage chemotaxis"/>
    <property type="evidence" value="ECO:0000266"/>
    <property type="project" value="RGD"/>
</dbReference>
<dbReference type="GO" id="GO:0002906">
    <property type="term" value="P:negative regulation of mature B cell apoptotic process"/>
    <property type="evidence" value="ECO:0000266"/>
    <property type="project" value="RGD"/>
</dbReference>
<dbReference type="GO" id="GO:0033033">
    <property type="term" value="P:negative regulation of myeloid cell apoptotic process"/>
    <property type="evidence" value="ECO:0000266"/>
    <property type="project" value="RGD"/>
</dbReference>
<dbReference type="GO" id="GO:0051248">
    <property type="term" value="P:negative regulation of protein metabolic process"/>
    <property type="evidence" value="ECO:0000266"/>
    <property type="project" value="RGD"/>
</dbReference>
<dbReference type="GO" id="GO:0002675">
    <property type="term" value="P:positive regulation of acute inflammatory response"/>
    <property type="evidence" value="ECO:0000315"/>
    <property type="project" value="RGD"/>
</dbReference>
<dbReference type="GO" id="GO:0090238">
    <property type="term" value="P:positive regulation of arachidonate secretion"/>
    <property type="evidence" value="ECO:0000266"/>
    <property type="project" value="RGD"/>
</dbReference>
<dbReference type="GO" id="GO:0048680">
    <property type="term" value="P:positive regulation of axon regeneration"/>
    <property type="evidence" value="ECO:0000315"/>
    <property type="project" value="RGD"/>
</dbReference>
<dbReference type="GO" id="GO:0030890">
    <property type="term" value="P:positive regulation of B cell proliferation"/>
    <property type="evidence" value="ECO:0000266"/>
    <property type="project" value="RGD"/>
</dbReference>
<dbReference type="GO" id="GO:0141163">
    <property type="term" value="P:positive regulation of cAMP/PKA signal transduction"/>
    <property type="evidence" value="ECO:0000266"/>
    <property type="project" value="RGD"/>
</dbReference>
<dbReference type="GO" id="GO:0008284">
    <property type="term" value="P:positive regulation of cell population proliferation"/>
    <property type="evidence" value="ECO:0000266"/>
    <property type="project" value="RGD"/>
</dbReference>
<dbReference type="GO" id="GO:2000343">
    <property type="term" value="P:positive regulation of chemokine (C-X-C motif) ligand 2 production"/>
    <property type="evidence" value="ECO:0000266"/>
    <property type="project" value="RGD"/>
</dbReference>
<dbReference type="GO" id="GO:0001819">
    <property type="term" value="P:positive regulation of cytokine production"/>
    <property type="evidence" value="ECO:0000266"/>
    <property type="project" value="RGD"/>
</dbReference>
<dbReference type="GO" id="GO:0046326">
    <property type="term" value="P:positive regulation of D-glucose import"/>
    <property type="evidence" value="ECO:0000315"/>
    <property type="project" value="RGD"/>
</dbReference>
<dbReference type="GO" id="GO:0070374">
    <property type="term" value="P:positive regulation of ERK1 and ERK2 cascade"/>
    <property type="evidence" value="ECO:0000266"/>
    <property type="project" value="RGD"/>
</dbReference>
<dbReference type="GO" id="GO:0048146">
    <property type="term" value="P:positive regulation of fibroblast proliferation"/>
    <property type="evidence" value="ECO:0000266"/>
    <property type="project" value="RGD"/>
</dbReference>
<dbReference type="GO" id="GO:0045821">
    <property type="term" value="P:positive regulation of glycolytic process"/>
    <property type="evidence" value="ECO:0000315"/>
    <property type="project" value="RGD"/>
</dbReference>
<dbReference type="GO" id="GO:0050778">
    <property type="term" value="P:positive regulation of immune response"/>
    <property type="evidence" value="ECO:0000315"/>
    <property type="project" value="RGD"/>
</dbReference>
<dbReference type="GO" id="GO:0031666">
    <property type="term" value="P:positive regulation of lipopolysaccharide-mediated signaling pathway"/>
    <property type="evidence" value="ECO:0000266"/>
    <property type="project" value="RGD"/>
</dbReference>
<dbReference type="GO" id="GO:0061081">
    <property type="term" value="P:positive regulation of myeloid leukocyte cytokine production involved in immune response"/>
    <property type="evidence" value="ECO:0000266"/>
    <property type="project" value="RGD"/>
</dbReference>
<dbReference type="GO" id="GO:0042327">
    <property type="term" value="P:positive regulation of phosphorylation"/>
    <property type="evidence" value="ECO:0000266"/>
    <property type="project" value="RGD"/>
</dbReference>
<dbReference type="GO" id="GO:0043268">
    <property type="term" value="P:positive regulation of potassium ion transport"/>
    <property type="evidence" value="ECO:0000315"/>
    <property type="project" value="RGD"/>
</dbReference>
<dbReference type="GO" id="GO:0061078">
    <property type="term" value="P:positive regulation of prostaglandin secretion involved in immune response"/>
    <property type="evidence" value="ECO:0000266"/>
    <property type="project" value="RGD"/>
</dbReference>
<dbReference type="GO" id="GO:0014911">
    <property type="term" value="P:positive regulation of smooth muscle cell migration"/>
    <property type="evidence" value="ECO:0000315"/>
    <property type="project" value="RGD"/>
</dbReference>
<dbReference type="GO" id="GO:0032760">
    <property type="term" value="P:positive regulation of tumor necrosis factor production"/>
    <property type="evidence" value="ECO:0000266"/>
    <property type="project" value="RGD"/>
</dbReference>
<dbReference type="GO" id="GO:0001516">
    <property type="term" value="P:prostaglandin biosynthetic process"/>
    <property type="evidence" value="ECO:0000266"/>
    <property type="project" value="RGD"/>
</dbReference>
<dbReference type="GO" id="GO:0070207">
    <property type="term" value="P:protein homotrimerization"/>
    <property type="evidence" value="ECO:0000266"/>
    <property type="project" value="RGD"/>
</dbReference>
<dbReference type="GO" id="GO:0042127">
    <property type="term" value="P:regulation of cell population proliferation"/>
    <property type="evidence" value="ECO:0000266"/>
    <property type="project" value="RGD"/>
</dbReference>
<dbReference type="GO" id="GO:0032355">
    <property type="term" value="P:response to estradiol"/>
    <property type="evidence" value="ECO:0000270"/>
    <property type="project" value="RGD"/>
</dbReference>
<dbReference type="GO" id="GO:0051384">
    <property type="term" value="P:response to glucocorticoid"/>
    <property type="evidence" value="ECO:0000270"/>
    <property type="project" value="RGD"/>
</dbReference>
<dbReference type="GO" id="GO:0009725">
    <property type="term" value="P:response to hormone"/>
    <property type="evidence" value="ECO:0000270"/>
    <property type="project" value="RGD"/>
</dbReference>
<dbReference type="GO" id="GO:0032868">
    <property type="term" value="P:response to insulin"/>
    <property type="evidence" value="ECO:0000270"/>
    <property type="project" value="RGD"/>
</dbReference>
<dbReference type="GO" id="GO:0032496">
    <property type="term" value="P:response to lipopolysaccharide"/>
    <property type="evidence" value="ECO:0000270"/>
    <property type="project" value="RGD"/>
</dbReference>
<dbReference type="GO" id="GO:0009612">
    <property type="term" value="P:response to mechanical stimulus"/>
    <property type="evidence" value="ECO:0000270"/>
    <property type="project" value="RGD"/>
</dbReference>
<dbReference type="GO" id="GO:0032572">
    <property type="term" value="P:response to menaquinone"/>
    <property type="evidence" value="ECO:0000270"/>
    <property type="project" value="RGD"/>
</dbReference>
<dbReference type="GO" id="GO:0032570">
    <property type="term" value="P:response to progesterone"/>
    <property type="evidence" value="ECO:0000270"/>
    <property type="project" value="RGD"/>
</dbReference>
<dbReference type="GO" id="GO:0033197">
    <property type="term" value="P:response to vitamin E"/>
    <property type="evidence" value="ECO:0000270"/>
    <property type="project" value="RGD"/>
</dbReference>
<dbReference type="GO" id="GO:0009410">
    <property type="term" value="P:response to xenobiotic stimulus"/>
    <property type="evidence" value="ECO:0000270"/>
    <property type="project" value="RGD"/>
</dbReference>
<dbReference type="GO" id="GO:0043588">
    <property type="term" value="P:skin development"/>
    <property type="evidence" value="ECO:0000270"/>
    <property type="project" value="RGD"/>
</dbReference>
<dbReference type="GO" id="GO:0007283">
    <property type="term" value="P:spermatogenesis"/>
    <property type="evidence" value="ECO:0000315"/>
    <property type="project" value="RGD"/>
</dbReference>
<dbReference type="FunFam" id="3.30.429.10:FF:000001">
    <property type="entry name" value="Macrophage migration inhibitory factor"/>
    <property type="match status" value="1"/>
</dbReference>
<dbReference type="Gene3D" id="3.30.429.10">
    <property type="entry name" value="Macrophage Migration Inhibitory Factor"/>
    <property type="match status" value="1"/>
</dbReference>
<dbReference type="InterPro" id="IPR001398">
    <property type="entry name" value="Macrophage_inhib_fac"/>
</dbReference>
<dbReference type="InterPro" id="IPR019829">
    <property type="entry name" value="Macrophage_inhib_fac_CS"/>
</dbReference>
<dbReference type="InterPro" id="IPR014347">
    <property type="entry name" value="Tautomerase/MIF_sf"/>
</dbReference>
<dbReference type="PANTHER" id="PTHR11954">
    <property type="entry name" value="D-DOPACHROME DECARBOXYLASE"/>
    <property type="match status" value="1"/>
</dbReference>
<dbReference type="PANTHER" id="PTHR11954:SF6">
    <property type="entry name" value="MACROPHAGE MIGRATION INHIBITORY FACTOR"/>
    <property type="match status" value="1"/>
</dbReference>
<dbReference type="Pfam" id="PF01187">
    <property type="entry name" value="MIF"/>
    <property type="match status" value="1"/>
</dbReference>
<dbReference type="SUPFAM" id="SSF55331">
    <property type="entry name" value="Tautomerase/MIF"/>
    <property type="match status" value="1"/>
</dbReference>
<dbReference type="PROSITE" id="PS01158">
    <property type="entry name" value="MIF"/>
    <property type="match status" value="1"/>
</dbReference>
<comment type="function">
    <text evidence="1">Pro-inflammatory cytokine involved in the innate immune response to bacterial pathogens. The expression of MIF at sites of inflammation suggests a role as mediator in regulating the function of macrophages in host defense. Counteracts the anti-inflammatory activity of glucocorticoids. Has phenylpyruvate tautomerase and dopachrome tautomerase activity (in vitro), but the physiological substrate is not known. It is not clear whether the tautomerase activity has any physiological relevance, and whether it is important for cytokine activity.</text>
</comment>
<comment type="catalytic activity">
    <reaction evidence="1">
        <text>3-phenylpyruvate = enol-phenylpyruvate</text>
        <dbReference type="Rhea" id="RHEA:17097"/>
        <dbReference type="ChEBI" id="CHEBI:16815"/>
        <dbReference type="ChEBI" id="CHEBI:18005"/>
        <dbReference type="EC" id="5.3.2.1"/>
    </reaction>
</comment>
<comment type="catalytic activity">
    <reaction evidence="1">
        <text>L-dopachrome = 5,6-dihydroxyindole-2-carboxylate</text>
        <dbReference type="Rhea" id="RHEA:13041"/>
        <dbReference type="ChEBI" id="CHEBI:16875"/>
        <dbReference type="ChEBI" id="CHEBI:57509"/>
        <dbReference type="EC" id="5.3.3.12"/>
    </reaction>
</comment>
<comment type="subunit">
    <text evidence="1 2">Homotrimer (By similarity). Interacts with CXCR2 extracellular domain (By similarity). Interacts with the CD74 extracellular domain, USO1, COPS5 and BNIPL (By similarity).</text>
</comment>
<comment type="subcellular location">
    <subcellularLocation>
        <location evidence="1">Secreted</location>
    </subcellularLocation>
    <subcellularLocation>
        <location evidence="1">Cytoplasm</location>
    </subcellularLocation>
    <text evidence="1">Does not have a cleavable signal sequence and is secreted via a specialized, non-classical pathway. Secreted by macrophages upon stimulation by bacterial lipopolysaccharide (LPS), or by M.tuberculosis antigens.</text>
</comment>
<comment type="tissue specificity">
    <text evidence="4">Expressed in a wide variety of organs including brain, spleen, liver, muscle and kidney.</text>
</comment>
<comment type="similarity">
    <text evidence="6">Belongs to the MIF family.</text>
</comment>
<evidence type="ECO:0000250" key="1">
    <source>
        <dbReference type="UniProtKB" id="P14174"/>
    </source>
</evidence>
<evidence type="ECO:0000250" key="2">
    <source>
        <dbReference type="UniProtKB" id="P34884"/>
    </source>
</evidence>
<evidence type="ECO:0000269" key="3">
    <source>
    </source>
</evidence>
<evidence type="ECO:0000269" key="4">
    <source>
    </source>
</evidence>
<evidence type="ECO:0000269" key="5">
    <source ref="6"/>
</evidence>
<evidence type="ECO:0000305" key="6"/>
<evidence type="ECO:0007829" key="7">
    <source>
        <dbReference type="PDB" id="1FIM"/>
    </source>
</evidence>
<gene>
    <name type="primary">Mif</name>
</gene>
<organism>
    <name type="scientific">Rattus norvegicus</name>
    <name type="common">Rat</name>
    <dbReference type="NCBI Taxonomy" id="10116"/>
    <lineage>
        <taxon>Eukaryota</taxon>
        <taxon>Metazoa</taxon>
        <taxon>Chordata</taxon>
        <taxon>Craniata</taxon>
        <taxon>Vertebrata</taxon>
        <taxon>Euteleostomi</taxon>
        <taxon>Mammalia</taxon>
        <taxon>Eutheria</taxon>
        <taxon>Euarchontoglires</taxon>
        <taxon>Glires</taxon>
        <taxon>Rodentia</taxon>
        <taxon>Myomorpha</taxon>
        <taxon>Muroidea</taxon>
        <taxon>Muridae</taxon>
        <taxon>Murinae</taxon>
        <taxon>Rattus</taxon>
    </lineage>
</organism>